<proteinExistence type="inferred from homology"/>
<name>FKBP4_NEUCR</name>
<organism>
    <name type="scientific">Neurospora crassa (strain ATCC 24698 / 74-OR23-1A / CBS 708.71 / DSM 1257 / FGSC 987)</name>
    <dbReference type="NCBI Taxonomy" id="367110"/>
    <lineage>
        <taxon>Eukaryota</taxon>
        <taxon>Fungi</taxon>
        <taxon>Dikarya</taxon>
        <taxon>Ascomycota</taxon>
        <taxon>Pezizomycotina</taxon>
        <taxon>Sordariomycetes</taxon>
        <taxon>Sordariomycetidae</taxon>
        <taxon>Sordariales</taxon>
        <taxon>Sordariaceae</taxon>
        <taxon>Neurospora</taxon>
    </lineage>
</organism>
<reference key="1">
    <citation type="journal article" date="2003" name="Nature">
        <title>The genome sequence of the filamentous fungus Neurospora crassa.</title>
        <authorList>
            <person name="Galagan J.E."/>
            <person name="Calvo S.E."/>
            <person name="Borkovich K.A."/>
            <person name="Selker E.U."/>
            <person name="Read N.D."/>
            <person name="Jaffe D.B."/>
            <person name="FitzHugh W."/>
            <person name="Ma L.-J."/>
            <person name="Smirnov S."/>
            <person name="Purcell S."/>
            <person name="Rehman B."/>
            <person name="Elkins T."/>
            <person name="Engels R."/>
            <person name="Wang S."/>
            <person name="Nielsen C.B."/>
            <person name="Butler J."/>
            <person name="Endrizzi M."/>
            <person name="Qui D."/>
            <person name="Ianakiev P."/>
            <person name="Bell-Pedersen D."/>
            <person name="Nelson M.A."/>
            <person name="Werner-Washburne M."/>
            <person name="Selitrennikoff C.P."/>
            <person name="Kinsey J.A."/>
            <person name="Braun E.L."/>
            <person name="Zelter A."/>
            <person name="Schulte U."/>
            <person name="Kothe G.O."/>
            <person name="Jedd G."/>
            <person name="Mewes H.-W."/>
            <person name="Staben C."/>
            <person name="Marcotte E."/>
            <person name="Greenberg D."/>
            <person name="Roy A."/>
            <person name="Foley K."/>
            <person name="Naylor J."/>
            <person name="Stange-Thomann N."/>
            <person name="Barrett R."/>
            <person name="Gnerre S."/>
            <person name="Kamal M."/>
            <person name="Kamvysselis M."/>
            <person name="Mauceli E.W."/>
            <person name="Bielke C."/>
            <person name="Rudd S."/>
            <person name="Frishman D."/>
            <person name="Krystofova S."/>
            <person name="Rasmussen C."/>
            <person name="Metzenberg R.L."/>
            <person name="Perkins D.D."/>
            <person name="Kroken S."/>
            <person name="Cogoni C."/>
            <person name="Macino G."/>
            <person name="Catcheside D.E.A."/>
            <person name="Li W."/>
            <person name="Pratt R.J."/>
            <person name="Osmani S.A."/>
            <person name="DeSouza C.P.C."/>
            <person name="Glass N.L."/>
            <person name="Orbach M.J."/>
            <person name="Berglund J.A."/>
            <person name="Voelker R."/>
            <person name="Yarden O."/>
            <person name="Plamann M."/>
            <person name="Seiler S."/>
            <person name="Dunlap J.C."/>
            <person name="Radford A."/>
            <person name="Aramayo R."/>
            <person name="Natvig D.O."/>
            <person name="Alex L.A."/>
            <person name="Mannhaupt G."/>
            <person name="Ebbole D.J."/>
            <person name="Freitag M."/>
            <person name="Paulsen I."/>
            <person name="Sachs M.S."/>
            <person name="Lander E.S."/>
            <person name="Nusbaum C."/>
            <person name="Birren B.W."/>
        </authorList>
    </citation>
    <scope>NUCLEOTIDE SEQUENCE [LARGE SCALE GENOMIC DNA]</scope>
    <source>
        <strain>ATCC 24698 / 74-OR23-1A / CBS 708.71 / DSM 1257 / FGSC 987</strain>
    </source>
</reference>
<evidence type="ECO:0000250" key="1"/>
<evidence type="ECO:0000250" key="2">
    <source>
        <dbReference type="UniProtKB" id="Q06205"/>
    </source>
</evidence>
<evidence type="ECO:0000255" key="3">
    <source>
        <dbReference type="PROSITE-ProRule" id="PRU00277"/>
    </source>
</evidence>
<evidence type="ECO:0000256" key="4">
    <source>
        <dbReference type="SAM" id="MobiDB-lite"/>
    </source>
</evidence>
<evidence type="ECO:0000305" key="5"/>
<comment type="function">
    <text evidence="2">PPIase that acts as a histone chaperone. Histone proline isomerase that increases the rate of cis-trans isomerization at prolines on the histone H3 N-terminal tail. Proline isomerization influences H3 methylation thereby regulating gene expression.</text>
</comment>
<comment type="catalytic activity">
    <reaction evidence="2">
        <text>[protein]-peptidylproline (omega=180) = [protein]-peptidylproline (omega=0)</text>
        <dbReference type="Rhea" id="RHEA:16237"/>
        <dbReference type="Rhea" id="RHEA-COMP:10747"/>
        <dbReference type="Rhea" id="RHEA-COMP:10748"/>
        <dbReference type="ChEBI" id="CHEBI:83833"/>
        <dbReference type="ChEBI" id="CHEBI:83834"/>
        <dbReference type="EC" id="5.2.1.8"/>
    </reaction>
</comment>
<comment type="activity regulation">
    <text evidence="1">Inhibited by both FK506 and rapamycin.</text>
</comment>
<comment type="subunit">
    <text evidence="2">Binds to histones H3 and H4.</text>
</comment>
<comment type="subcellular location">
    <subcellularLocation>
        <location evidence="2">Nucleus</location>
    </subcellularLocation>
</comment>
<comment type="similarity">
    <text evidence="5">Belongs to the FKBP-type PPIase family. FKBP3/4 subfamily.</text>
</comment>
<gene>
    <name type="primary">fkr-4</name>
    <name type="ORF">NCU03241</name>
</gene>
<keyword id="KW-0143">Chaperone</keyword>
<keyword id="KW-0413">Isomerase</keyword>
<keyword id="KW-0539">Nucleus</keyword>
<keyword id="KW-1185">Reference proteome</keyword>
<keyword id="KW-0697">Rotamase</keyword>
<dbReference type="EC" id="5.2.1.8" evidence="2"/>
<dbReference type="EMBL" id="CM002236">
    <property type="protein sequence ID" value="EAA34497.1"/>
    <property type="molecule type" value="Genomic_DNA"/>
</dbReference>
<dbReference type="RefSeq" id="XP_963733.1">
    <property type="nucleotide sequence ID" value="XM_958640.3"/>
</dbReference>
<dbReference type="SMR" id="Q7SCN0"/>
<dbReference type="FunCoup" id="Q7SCN0">
    <property type="interactions" value="518"/>
</dbReference>
<dbReference type="STRING" id="367110.Q7SCN0"/>
<dbReference type="PaxDb" id="5141-EFNCRP00000002989"/>
<dbReference type="EnsemblFungi" id="EAA34497">
    <property type="protein sequence ID" value="EAA34497"/>
    <property type="gene ID" value="NCU03241"/>
</dbReference>
<dbReference type="GeneID" id="3879882"/>
<dbReference type="KEGG" id="ncr:NCU03241"/>
<dbReference type="VEuPathDB" id="FungiDB:NCU03241"/>
<dbReference type="HOGENOM" id="CLU_022297_3_1_1"/>
<dbReference type="InParanoid" id="Q7SCN0"/>
<dbReference type="OMA" id="CPPHMAY"/>
<dbReference type="OrthoDB" id="77911at2759"/>
<dbReference type="Proteomes" id="UP000001805">
    <property type="component" value="Chromosome 1, Linkage Group I"/>
</dbReference>
<dbReference type="GO" id="GO:0000785">
    <property type="term" value="C:chromatin"/>
    <property type="evidence" value="ECO:0000318"/>
    <property type="project" value="GO_Central"/>
</dbReference>
<dbReference type="GO" id="GO:0005730">
    <property type="term" value="C:nucleolus"/>
    <property type="evidence" value="ECO:0000318"/>
    <property type="project" value="GO_Central"/>
</dbReference>
<dbReference type="GO" id="GO:0003755">
    <property type="term" value="F:peptidyl-prolyl cis-trans isomerase activity"/>
    <property type="evidence" value="ECO:0000318"/>
    <property type="project" value="GO_Central"/>
</dbReference>
<dbReference type="FunFam" id="3.10.50.40:FF:000006">
    <property type="entry name" value="Peptidyl-prolyl cis-trans isomerase"/>
    <property type="match status" value="1"/>
</dbReference>
<dbReference type="Gene3D" id="3.10.50.40">
    <property type="match status" value="1"/>
</dbReference>
<dbReference type="Gene3D" id="2.60.120.340">
    <property type="entry name" value="Nucleoplasmin core domain"/>
    <property type="match status" value="1"/>
</dbReference>
<dbReference type="InterPro" id="IPR041232">
    <property type="entry name" value="NPL"/>
</dbReference>
<dbReference type="InterPro" id="IPR046357">
    <property type="entry name" value="PPIase_dom_sf"/>
</dbReference>
<dbReference type="InterPro" id="IPR001179">
    <property type="entry name" value="PPIase_FKBP_dom"/>
</dbReference>
<dbReference type="InterPro" id="IPR023566">
    <property type="entry name" value="PPIase_Fpr3/Fpr4-like"/>
</dbReference>
<dbReference type="PANTHER" id="PTHR43811:SF19">
    <property type="entry name" value="39 KDA FK506-BINDING NUCLEAR PROTEIN"/>
    <property type="match status" value="1"/>
</dbReference>
<dbReference type="PANTHER" id="PTHR43811">
    <property type="entry name" value="FKBP-TYPE PEPTIDYL-PROLYL CIS-TRANS ISOMERASE FKPA"/>
    <property type="match status" value="1"/>
</dbReference>
<dbReference type="Pfam" id="PF00254">
    <property type="entry name" value="FKBP_C"/>
    <property type="match status" value="1"/>
</dbReference>
<dbReference type="Pfam" id="PF17800">
    <property type="entry name" value="NPL"/>
    <property type="match status" value="1"/>
</dbReference>
<dbReference type="PIRSF" id="PIRSF001473">
    <property type="entry name" value="FK506-bp_FPR3"/>
    <property type="match status" value="1"/>
</dbReference>
<dbReference type="SUPFAM" id="SSF54534">
    <property type="entry name" value="FKBP-like"/>
    <property type="match status" value="1"/>
</dbReference>
<dbReference type="PROSITE" id="PS50059">
    <property type="entry name" value="FKBP_PPIASE"/>
    <property type="match status" value="1"/>
</dbReference>
<accession>Q7SCN0</accession>
<feature type="chain" id="PRO_0000233084" description="FK506-binding protein 4">
    <location>
        <begin position="1"/>
        <end position="467"/>
    </location>
</feature>
<feature type="domain" description="PPIase FKBP-type" evidence="3">
    <location>
        <begin position="381"/>
        <end position="467"/>
    </location>
</feature>
<feature type="region of interest" description="Disordered" evidence="4">
    <location>
        <begin position="64"/>
        <end position="163"/>
    </location>
</feature>
<feature type="region of interest" description="Disordered" evidence="4">
    <location>
        <begin position="208"/>
        <end position="357"/>
    </location>
</feature>
<feature type="compositionally biased region" description="Acidic residues" evidence="4">
    <location>
        <begin position="71"/>
        <end position="80"/>
    </location>
</feature>
<feature type="compositionally biased region" description="Acidic residues" evidence="4">
    <location>
        <begin position="147"/>
        <end position="163"/>
    </location>
</feature>
<feature type="compositionally biased region" description="Acidic residues" evidence="4">
    <location>
        <begin position="213"/>
        <end position="254"/>
    </location>
</feature>
<feature type="compositionally biased region" description="Basic and acidic residues" evidence="4">
    <location>
        <begin position="271"/>
        <end position="287"/>
    </location>
</feature>
<feature type="compositionally biased region" description="Basic and acidic residues" evidence="4">
    <location>
        <begin position="312"/>
        <end position="332"/>
    </location>
</feature>
<protein>
    <recommendedName>
        <fullName>FK506-binding protein 4</fullName>
        <shortName>FKBP4</shortName>
        <ecNumber evidence="2">5.2.1.8</ecNumber>
    </recommendedName>
    <alternativeName>
        <fullName>FK506-resistance protein 4</fullName>
    </alternativeName>
    <alternativeName>
        <fullName evidence="2">Histone proline isomerase</fullName>
    </alternativeName>
    <alternativeName>
        <fullName>Peptidyl-prolyl cis-trans isomerase fkr-4</fullName>
        <shortName>PPIase fkr-4</shortName>
    </alternativeName>
    <alternativeName>
        <fullName>Rotamase</fullName>
    </alternativeName>
</protein>
<sequence>MAPLMPVAVFGLEVPPGEILIPAASEFPAIIHITMAALDPTKAPEADGQGNIPALPRSTLKIIKATGHDHDDDDEEEDEYLQSLLGGGDSDDEANGGPSDPSKSKKAKQEAAIKKLMAATQEESDEEMEDAKPNGKKGKGKGKASESDEEESDEESDCCGDDDLQLEDYVVCTLDTERNYQQPINITIGEGEKVFFCVQGTHSVYLTGNFVVPEDDEEDSEDDEDESDDEDYDFPLGGEDDDSDDMSDELDELDGTPRVKEITSEDEEEEAPKLVDTSKKGKKRPAEDDAEGLDAMISKDDKKLSKKQQKKQKVEEAKKEEPKKETKSDKKVQFAKNLEQGPTGPAKDKLENKKPTSTVKVVQGVTIDDRKVGTGRAAKNGDRVGMRYIGKLQNGKVFDSNKKGAPFSFKLGKGEVIKGWDIGVAGMAVGGERRLTIPAHLAYGSRALPGIPPNSTLIFDVKLLEIK</sequence>